<gene>
    <name type="ORF">GA16019</name>
</gene>
<feature type="chain" id="PRO_0000415089" description="Purine nucleoside phosphorylase">
    <location>
        <begin position="1"/>
        <end position="288"/>
    </location>
</feature>
<feature type="binding site" evidence="1">
    <location>
        <begin position="65"/>
        <end position="66"/>
    </location>
    <ligand>
        <name>phosphate</name>
        <dbReference type="ChEBI" id="CHEBI:43474"/>
    </ligand>
</feature>
<feature type="binding site" evidence="1">
    <location>
        <position position="201"/>
    </location>
    <ligand>
        <name>substrate</name>
    </ligand>
</feature>
<feature type="binding site" evidence="1">
    <location>
        <position position="202"/>
    </location>
    <ligand>
        <name>phosphate</name>
        <dbReference type="ChEBI" id="CHEBI:43474"/>
    </ligand>
</feature>
<feature type="site" description="Important for substrate specificity" evidence="1">
    <location>
        <position position="183"/>
    </location>
</feature>
<feature type="site" description="Important for substrate specificity" evidence="1">
    <location>
        <position position="238"/>
    </location>
</feature>
<protein>
    <recommendedName>
        <fullName evidence="1">Purine nucleoside phosphorylase</fullName>
        <shortName evidence="1">PNP</shortName>
        <ecNumber evidence="1">2.4.2.1</ecNumber>
    </recommendedName>
</protein>
<organism>
    <name type="scientific">Drosophila pseudoobscura pseudoobscura</name>
    <name type="common">Fruit fly</name>
    <dbReference type="NCBI Taxonomy" id="46245"/>
    <lineage>
        <taxon>Eukaryota</taxon>
        <taxon>Metazoa</taxon>
        <taxon>Ecdysozoa</taxon>
        <taxon>Arthropoda</taxon>
        <taxon>Hexapoda</taxon>
        <taxon>Insecta</taxon>
        <taxon>Pterygota</taxon>
        <taxon>Neoptera</taxon>
        <taxon>Endopterygota</taxon>
        <taxon>Diptera</taxon>
        <taxon>Brachycera</taxon>
        <taxon>Muscomorpha</taxon>
        <taxon>Ephydroidea</taxon>
        <taxon>Drosophilidae</taxon>
        <taxon>Drosophila</taxon>
        <taxon>Sophophora</taxon>
    </lineage>
</organism>
<evidence type="ECO:0000255" key="1">
    <source>
        <dbReference type="HAMAP-Rule" id="MF_03155"/>
    </source>
</evidence>
<name>PNPH_DROPS</name>
<dbReference type="EC" id="2.4.2.1" evidence="1"/>
<dbReference type="EMBL" id="CM000070">
    <property type="protein sequence ID" value="EAL28250.2"/>
    <property type="molecule type" value="Genomic_DNA"/>
</dbReference>
<dbReference type="RefSeq" id="XP_001359107.2">
    <property type="nucleotide sequence ID" value="XM_001359070.3"/>
</dbReference>
<dbReference type="SMR" id="Q297F5"/>
<dbReference type="FunCoup" id="Q297F5">
    <property type="interactions" value="102"/>
</dbReference>
<dbReference type="STRING" id="46245.Q297F5"/>
<dbReference type="EnsemblMetazoa" id="FBtr0283324">
    <property type="protein sequence ID" value="FBpp0281762"/>
    <property type="gene ID" value="FBgn0076035"/>
</dbReference>
<dbReference type="KEGG" id="dpo:4802126"/>
<dbReference type="eggNOG" id="KOG3985">
    <property type="taxonomic scope" value="Eukaryota"/>
</dbReference>
<dbReference type="HOGENOM" id="CLU_054456_0_0_1"/>
<dbReference type="InParanoid" id="Q297F5"/>
<dbReference type="OMA" id="CTPFGKP"/>
<dbReference type="UniPathway" id="UPA00606"/>
<dbReference type="Proteomes" id="UP000001819">
    <property type="component" value="Chromosome 2"/>
</dbReference>
<dbReference type="Bgee" id="FBgn0076035">
    <property type="expression patterns" value="Expressed in male reproductive system and 2 other cell types or tissues"/>
</dbReference>
<dbReference type="ExpressionAtlas" id="Q297F5">
    <property type="expression patterns" value="baseline"/>
</dbReference>
<dbReference type="GO" id="GO:0005829">
    <property type="term" value="C:cytosol"/>
    <property type="evidence" value="ECO:0007669"/>
    <property type="project" value="TreeGrafter"/>
</dbReference>
<dbReference type="GO" id="GO:0005634">
    <property type="term" value="C:nucleus"/>
    <property type="evidence" value="ECO:0007669"/>
    <property type="project" value="UniProtKB-SubCell"/>
</dbReference>
<dbReference type="GO" id="GO:0017061">
    <property type="term" value="F:S-methyl-5-thioadenosine phosphorylase activity"/>
    <property type="evidence" value="ECO:0007669"/>
    <property type="project" value="InterPro"/>
</dbReference>
<dbReference type="GO" id="GO:0019509">
    <property type="term" value="P:L-methionine salvage from methylthioadenosine"/>
    <property type="evidence" value="ECO:0007669"/>
    <property type="project" value="TreeGrafter"/>
</dbReference>
<dbReference type="GO" id="GO:0006166">
    <property type="term" value="P:purine ribonucleoside salvage"/>
    <property type="evidence" value="ECO:0007669"/>
    <property type="project" value="UniProtKB-UniRule"/>
</dbReference>
<dbReference type="CDD" id="cd09010">
    <property type="entry name" value="MTAP_SsMTAPII_like_MTIP"/>
    <property type="match status" value="1"/>
</dbReference>
<dbReference type="Gene3D" id="3.40.50.1580">
    <property type="entry name" value="Nucleoside phosphorylase domain"/>
    <property type="match status" value="1"/>
</dbReference>
<dbReference type="HAMAP" id="MF_01963">
    <property type="entry name" value="MTAP"/>
    <property type="match status" value="1"/>
</dbReference>
<dbReference type="InterPro" id="IPR010044">
    <property type="entry name" value="MTAP"/>
</dbReference>
<dbReference type="InterPro" id="IPR000845">
    <property type="entry name" value="Nucleoside_phosphorylase_d"/>
</dbReference>
<dbReference type="InterPro" id="IPR035994">
    <property type="entry name" value="Nucleoside_phosphorylase_sf"/>
</dbReference>
<dbReference type="PANTHER" id="PTHR42679">
    <property type="entry name" value="S-METHYL-5'-THIOADENOSINE PHOSPHORYLASE"/>
    <property type="match status" value="1"/>
</dbReference>
<dbReference type="PANTHER" id="PTHR42679:SF2">
    <property type="entry name" value="S-METHYL-5'-THIOADENOSINE PHOSPHORYLASE"/>
    <property type="match status" value="1"/>
</dbReference>
<dbReference type="Pfam" id="PF01048">
    <property type="entry name" value="PNP_UDP_1"/>
    <property type="match status" value="1"/>
</dbReference>
<dbReference type="SUPFAM" id="SSF53167">
    <property type="entry name" value="Purine and uridine phosphorylases"/>
    <property type="match status" value="1"/>
</dbReference>
<proteinExistence type="inferred from homology"/>
<sequence>MENNLAPINEDPFPIKIGIIGDADLDTTISLQDRMEYAVCTPFGKPSDIIIEGLIDGVKCALLCRNGRLHDIMPTNINYRANIWAMRKLGCTHILVTHSLSSLREDIMPGDFVVPNDLIDHTTRRAQTFYDGALGSPFGVCHLPMYPAFCERTRQHLLNAAQELDLATHSKATVLTLEGPRYSTLAENNIYRKWGADLLSMTLSPEATLAKEAGILYASIGLVTNIECWCANQPIATTHEIIYVFKNKVEKLQQVLSKAIANISKEDWSEDILKAKILVCSNFANRNK</sequence>
<comment type="function">
    <text evidence="1">Purine nucleoside phosphorylase involved in purine salvage.</text>
</comment>
<comment type="catalytic activity">
    <reaction evidence="1">
        <text>a purine D-ribonucleoside + phosphate = a purine nucleobase + alpha-D-ribose 1-phosphate</text>
        <dbReference type="Rhea" id="RHEA:19805"/>
        <dbReference type="ChEBI" id="CHEBI:26386"/>
        <dbReference type="ChEBI" id="CHEBI:43474"/>
        <dbReference type="ChEBI" id="CHEBI:57720"/>
        <dbReference type="ChEBI" id="CHEBI:142355"/>
        <dbReference type="EC" id="2.4.2.1"/>
    </reaction>
</comment>
<comment type="pathway">
    <text evidence="1">Purine metabolism; purine nucleoside salvage.</text>
</comment>
<comment type="subunit">
    <text evidence="1">Homotrimer.</text>
</comment>
<comment type="subcellular location">
    <subcellularLocation>
        <location evidence="1">Cytoplasm</location>
    </subcellularLocation>
    <subcellularLocation>
        <location evidence="1">Nucleus</location>
    </subcellularLocation>
</comment>
<comment type="miscellaneous">
    <text evidence="1">Although this enzyme belongs to the family of MTA phosphorylases based on sequence homology, it lacks several conserved amino acids in the substrate binding pocket that confer specificity towards MTA.</text>
</comment>
<comment type="similarity">
    <text evidence="1">Belongs to the PNP/MTAP phosphorylase family. MTAP subfamily.</text>
</comment>
<keyword id="KW-0963">Cytoplasm</keyword>
<keyword id="KW-0328">Glycosyltransferase</keyword>
<keyword id="KW-0539">Nucleus</keyword>
<keyword id="KW-0660">Purine salvage</keyword>
<keyword id="KW-1185">Reference proteome</keyword>
<keyword id="KW-0808">Transferase</keyword>
<reference key="1">
    <citation type="journal article" date="2005" name="Genome Res.">
        <title>Comparative genome sequencing of Drosophila pseudoobscura: chromosomal, gene, and cis-element evolution.</title>
        <authorList>
            <person name="Richards S."/>
            <person name="Liu Y."/>
            <person name="Bettencourt B.R."/>
            <person name="Hradecky P."/>
            <person name="Letovsky S."/>
            <person name="Nielsen R."/>
            <person name="Thornton K."/>
            <person name="Hubisz M.J."/>
            <person name="Chen R."/>
            <person name="Meisel R.P."/>
            <person name="Couronne O."/>
            <person name="Hua S."/>
            <person name="Smith M.A."/>
            <person name="Zhang P."/>
            <person name="Liu J."/>
            <person name="Bussemaker H.J."/>
            <person name="van Batenburg M.F."/>
            <person name="Howells S.L."/>
            <person name="Scherer S.E."/>
            <person name="Sodergren E."/>
            <person name="Matthews B.B."/>
            <person name="Crosby M.A."/>
            <person name="Schroeder A.J."/>
            <person name="Ortiz-Barrientos D."/>
            <person name="Rives C.M."/>
            <person name="Metzker M.L."/>
            <person name="Muzny D.M."/>
            <person name="Scott G."/>
            <person name="Steffen D."/>
            <person name="Wheeler D.A."/>
            <person name="Worley K.C."/>
            <person name="Havlak P."/>
            <person name="Durbin K.J."/>
            <person name="Egan A."/>
            <person name="Gill R."/>
            <person name="Hume J."/>
            <person name="Morgan M.B."/>
            <person name="Miner G."/>
            <person name="Hamilton C."/>
            <person name="Huang Y."/>
            <person name="Waldron L."/>
            <person name="Verduzco D."/>
            <person name="Clerc-Blankenburg K.P."/>
            <person name="Dubchak I."/>
            <person name="Noor M.A.F."/>
            <person name="Anderson W."/>
            <person name="White K.P."/>
            <person name="Clark A.G."/>
            <person name="Schaeffer S.W."/>
            <person name="Gelbart W.M."/>
            <person name="Weinstock G.M."/>
            <person name="Gibbs R.A."/>
        </authorList>
    </citation>
    <scope>NUCLEOTIDE SEQUENCE [LARGE SCALE GENOMIC DNA]</scope>
    <source>
        <strain>MV2-25 / Tucson 14011-0121.94</strain>
    </source>
</reference>
<accession>Q297F5</accession>